<dbReference type="EMBL" id="AE001273">
    <property type="protein sequence ID" value="AAC67950.1"/>
    <property type="molecule type" value="Genomic_DNA"/>
</dbReference>
<dbReference type="PIR" id="D71526">
    <property type="entry name" value="D71526"/>
</dbReference>
<dbReference type="RefSeq" id="NP_219863.1">
    <property type="nucleotide sequence ID" value="NC_000117.1"/>
</dbReference>
<dbReference type="RefSeq" id="WP_009871706.1">
    <property type="nucleotide sequence ID" value="NC_000117.1"/>
</dbReference>
<dbReference type="STRING" id="272561.CT_355"/>
<dbReference type="EnsemblBacteria" id="AAC67950">
    <property type="protein sequence ID" value="AAC67950"/>
    <property type="gene ID" value="CT_355"/>
</dbReference>
<dbReference type="GeneID" id="884764"/>
<dbReference type="KEGG" id="ctr:CT_355"/>
<dbReference type="PATRIC" id="fig|272561.5.peg.383"/>
<dbReference type="HOGENOM" id="CLU_066871_0_0_0"/>
<dbReference type="InParanoid" id="O84359"/>
<dbReference type="OrthoDB" id="20874at2"/>
<dbReference type="Proteomes" id="UP000000431">
    <property type="component" value="Chromosome"/>
</dbReference>
<dbReference type="GO" id="GO:0003755">
    <property type="term" value="F:peptidyl-prolyl cis-trans isomerase activity"/>
    <property type="evidence" value="ECO:0007669"/>
    <property type="project" value="InterPro"/>
</dbReference>
<dbReference type="Gene3D" id="3.10.50.40">
    <property type="match status" value="1"/>
</dbReference>
<dbReference type="Gene3D" id="1.10.4030.10">
    <property type="entry name" value="Porin chaperone SurA, peptide-binding domain"/>
    <property type="match status" value="1"/>
</dbReference>
<dbReference type="InterPro" id="IPR046357">
    <property type="entry name" value="PPIase_dom_sf"/>
</dbReference>
<dbReference type="InterPro" id="IPR027304">
    <property type="entry name" value="Trigger_fact/SurA_dom_sf"/>
</dbReference>
<dbReference type="SUPFAM" id="SSF109998">
    <property type="entry name" value="Triger factor/SurA peptide-binding domain-like"/>
    <property type="match status" value="1"/>
</dbReference>
<accession>O84359</accession>
<gene>
    <name type="ordered locus">CT_355</name>
</gene>
<keyword id="KW-1185">Reference proteome</keyword>
<keyword id="KW-0732">Signal</keyword>
<name>Y355_CHLTR</name>
<sequence length="353" mass="39969">MRVVERAVIACYLGITIFSGIAFGYEGAFSSGSFEQNPSGVAIHNRVLFKVDEDTVVTTLDVIRKLNILFYSTCPQLVDSVSARSQYYSAMWPVVLETVINEFLMAADAKAKKIFIDPTSVNQEIEAMFGRDLSPFAKFFDMTPEDVFNVVHRILVAQRVEGMMVRSRVMLKVTPGMVREYYQKLADEAAQITQWTYRVLTIKAGLEFLAHKIAGKVQERLNEGSSWDKERLTALVLSQGGQLMCSEEFFREDAQLSVAHRQSLEEINFPEERCGKVLEHASGLKLFVLFNRATKTLDPLDKMEAQLKQQLMMEFAAEEEANYKNKLHARYGFDPATITKLLAEDAPQLFSLL</sequence>
<protein>
    <recommendedName>
        <fullName>Uncharacterized protein CT_355</fullName>
    </recommendedName>
</protein>
<organism>
    <name type="scientific">Chlamydia trachomatis serovar D (strain ATCC VR-885 / DSM 19411 / UW-3/Cx)</name>
    <dbReference type="NCBI Taxonomy" id="272561"/>
    <lineage>
        <taxon>Bacteria</taxon>
        <taxon>Pseudomonadati</taxon>
        <taxon>Chlamydiota</taxon>
        <taxon>Chlamydiia</taxon>
        <taxon>Chlamydiales</taxon>
        <taxon>Chlamydiaceae</taxon>
        <taxon>Chlamydia/Chlamydophila group</taxon>
        <taxon>Chlamydia</taxon>
    </lineage>
</organism>
<comment type="similarity">
    <text evidence="2">Belongs to the chlamydial CPn_1058/CT_355/TC_0634 family.</text>
</comment>
<evidence type="ECO:0000255" key="1"/>
<evidence type="ECO:0000305" key="2"/>
<feature type="signal peptide" evidence="1">
    <location>
        <begin position="1"/>
        <end position="24"/>
    </location>
</feature>
<feature type="chain" id="PRO_0000013762" description="Uncharacterized protein CT_355">
    <location>
        <begin position="25"/>
        <end position="353"/>
    </location>
</feature>
<proteinExistence type="inferred from homology"/>
<reference key="1">
    <citation type="journal article" date="1998" name="Science">
        <title>Genome sequence of an obligate intracellular pathogen of humans: Chlamydia trachomatis.</title>
        <authorList>
            <person name="Stephens R.S."/>
            <person name="Kalman S."/>
            <person name="Lammel C.J."/>
            <person name="Fan J."/>
            <person name="Marathe R."/>
            <person name="Aravind L."/>
            <person name="Mitchell W.P."/>
            <person name="Olinger L."/>
            <person name="Tatusov R.L."/>
            <person name="Zhao Q."/>
            <person name="Koonin E.V."/>
            <person name="Davis R.W."/>
        </authorList>
    </citation>
    <scope>NUCLEOTIDE SEQUENCE [LARGE SCALE GENOMIC DNA]</scope>
    <source>
        <strain>ATCC VR-885 / DSM 19411 / UW-3/Cx</strain>
    </source>
</reference>